<evidence type="ECO:0000255" key="1"/>
<evidence type="ECO:0000269" key="2">
    <source>
    </source>
</evidence>
<evidence type="ECO:0000269" key="3">
    <source>
    </source>
</evidence>
<evidence type="ECO:0000303" key="4">
    <source>
    </source>
</evidence>
<evidence type="ECO:0000303" key="5">
    <source>
    </source>
</evidence>
<evidence type="ECO:0000305" key="6"/>
<evidence type="ECO:0000312" key="7">
    <source>
        <dbReference type="EMBL" id="ACU24234.1"/>
    </source>
</evidence>
<evidence type="ECO:0000312" key="8">
    <source>
        <dbReference type="EMBL" id="KRH42215.1"/>
    </source>
</evidence>
<evidence type="ECO:0000312" key="9">
    <source>
        <dbReference type="EnsemblPlants" id="KRH42215"/>
    </source>
</evidence>
<feature type="chain" id="PRO_0000459791" description="VIT-like transporter 1b">
    <location>
        <begin position="1"/>
        <end position="229"/>
    </location>
</feature>
<feature type="transmembrane region" description="Helical" evidence="1">
    <location>
        <begin position="55"/>
        <end position="75"/>
    </location>
</feature>
<feature type="transmembrane region" description="Helical" evidence="1">
    <location>
        <begin position="83"/>
        <end position="103"/>
    </location>
</feature>
<feature type="transmembrane region" description="Helical" evidence="1">
    <location>
        <begin position="145"/>
        <end position="165"/>
    </location>
</feature>
<feature type="transmembrane region" description="Helical" evidence="1">
    <location>
        <begin position="172"/>
        <end position="192"/>
    </location>
</feature>
<feature type="transmembrane region" description="Helical" evidence="1">
    <location>
        <begin position="205"/>
        <end position="225"/>
    </location>
</feature>
<feature type="sequence conflict" description="In Ref. 1; ACU24234." evidence="6" ref="1">
    <original>S</original>
    <variation>F</variation>
    <location>
        <position position="147"/>
    </location>
</feature>
<feature type="sequence conflict" description="In Ref. 1; ACU24234." evidence="6" ref="1">
    <original>S</original>
    <variation>F</variation>
    <location>
        <position position="161"/>
    </location>
</feature>
<keyword id="KW-0256">Endoplasmic reticulum</keyword>
<keyword id="KW-0406">Ion transport</keyword>
<keyword id="KW-0408">Iron</keyword>
<keyword id="KW-0410">Iron transport</keyword>
<keyword id="KW-0472">Membrane</keyword>
<keyword id="KW-0479">Metal-binding</keyword>
<keyword id="KW-0535">Nitrogen fixation</keyword>
<keyword id="KW-0536">Nodulation</keyword>
<keyword id="KW-1185">Reference proteome</keyword>
<keyword id="KW-0812">Transmembrane</keyword>
<keyword id="KW-1133">Transmembrane helix</keyword>
<keyword id="KW-0813">Transport</keyword>
<keyword id="KW-0926">Vacuole</keyword>
<proteinExistence type="evidence at transcript level"/>
<gene>
    <name evidence="5" type="primary">VTL1b</name>
    <name evidence="9" type="synonym">100791523</name>
    <name evidence="8" type="ORF">GLYMA_08G076300</name>
</gene>
<protein>
    <recommendedName>
        <fullName evidence="4">VIT-like transporter 1b</fullName>
        <shortName evidence="4 5">GmVTL1b</shortName>
    </recommendedName>
</protein>
<name>VTH1B_SOYBN</name>
<reference evidence="7" key="1">
    <citation type="submission" date="2009-08" db="EMBL/GenBank/DDBJ databases">
        <authorList>
            <person name="Cheung F."/>
            <person name="Xiao Y."/>
            <person name="Chan A."/>
            <person name="Moskal W."/>
            <person name="Town C.D."/>
        </authorList>
    </citation>
    <scope>NUCLEOTIDE SEQUENCE [MRNA]</scope>
</reference>
<reference evidence="9" key="2">
    <citation type="journal article" date="2010" name="Nature">
        <title>Genome sequence of the palaeopolyploid soybean.</title>
        <authorList>
            <person name="Schmutz J."/>
            <person name="Cannon S.B."/>
            <person name="Schlueter J."/>
            <person name="Ma J."/>
            <person name="Mitros T."/>
            <person name="Nelson W."/>
            <person name="Hyten D.L."/>
            <person name="Song Q."/>
            <person name="Thelen J.J."/>
            <person name="Cheng J."/>
            <person name="Xu D."/>
            <person name="Hellsten U."/>
            <person name="May G.D."/>
            <person name="Yu Y."/>
            <person name="Sakurai T."/>
            <person name="Umezawa T."/>
            <person name="Bhattacharyya M.K."/>
            <person name="Sandhu D."/>
            <person name="Valliyodan B."/>
            <person name="Lindquist E."/>
            <person name="Peto M."/>
            <person name="Grant D."/>
            <person name="Shu S."/>
            <person name="Goodstein D."/>
            <person name="Barry K."/>
            <person name="Futrell-Griggs M."/>
            <person name="Abernathy B."/>
            <person name="Du J."/>
            <person name="Tian Z."/>
            <person name="Zhu L."/>
            <person name="Gill N."/>
            <person name="Joshi T."/>
            <person name="Libault M."/>
            <person name="Sethuraman A."/>
            <person name="Zhang X.-C."/>
            <person name="Shinozaki K."/>
            <person name="Nguyen H.T."/>
            <person name="Wing R.A."/>
            <person name="Cregan P."/>
            <person name="Specht J."/>
            <person name="Grimwood J."/>
            <person name="Rokhsar D."/>
            <person name="Stacey G."/>
            <person name="Shoemaker R.C."/>
            <person name="Jackson S.A."/>
        </authorList>
    </citation>
    <scope>NUCLEOTIDE SEQUENCE [LARGE SCALE GENOMIC DNA]</scope>
    <source>
        <strain>cv. Williams 82</strain>
        <tissue evidence="8">Callus</tissue>
    </source>
</reference>
<reference evidence="6" key="3">
    <citation type="journal article" date="2020" name="New Phytol.">
        <title>A VIT-like transporter facilitates iron transport into nodule symbiosomes for nitrogen fixation in soybean.</title>
        <authorList>
            <person name="Liu S."/>
            <person name="Liao L.L."/>
            <person name="Nie M.M."/>
            <person name="Peng W.T."/>
            <person name="Zhang M.S."/>
            <person name="Lei J.N."/>
            <person name="Zhong Y.J."/>
            <person name="Liao H."/>
            <person name="Chen Z.C."/>
        </authorList>
    </citation>
    <scope>FUNCTION</scope>
    <scope>TRANSPORTER ACTIVITY</scope>
    <scope>SUBCELLULAR LOCATION</scope>
    <scope>TISSUE SPECIFICITY</scope>
    <scope>DEVELOPMENTAL STAGE</scope>
    <scope>INDUCTION</scope>
</reference>
<reference evidence="6" key="4">
    <citation type="journal article" date="2020" name="New Phytol.">
        <title>GmVTL1a is an iron transporter on the symbiosome membrane of soybean with an important role in nitrogen fixation.</title>
        <authorList>
            <person name="Brear E.M."/>
            <person name="Bedon F."/>
            <person name="Gavrin A."/>
            <person name="Kryvoruchko I.S."/>
            <person name="Torres-Jerez I."/>
            <person name="Udvardi M.K."/>
            <person name="Day D.A."/>
            <person name="Smith P.M.C."/>
        </authorList>
    </citation>
    <scope>FUNCTION</scope>
    <scope>TRANSPORTER ACTIVITY</scope>
    <scope>SUBCELLULAR LOCATION</scope>
    <scope>TISSUE SPECIFICITY</scope>
    <scope>DEVELOPMENTAL STAGE</scope>
    <source>
        <strain evidence="5">cv. Stephens</strain>
    </source>
</reference>
<accession>I1KR70</accession>
<accession>C6TMU2</accession>
<sequence length="229" mass="24026">MANATPNGSVPHNHVGAVLPTIPTIKIDEKQTLATSEDHTSIDYLQRAQWLRAAVLGANDGLVSVTSLMMGVGAVKKDAKAMLVAGFAGLVAGACGMAIGEFVAVCTQYEVELGQMKREMNMSEGGERDLETEKRTLPNPLQATWASALSFSIGALVPLLSAAFVADYRTRVIVVVAMASLALVVFGSVGAQLGKTPKLKSCVRFLLGGWIAMSITFGLTKLMGASALE</sequence>
<organism evidence="9">
    <name type="scientific">Glycine max</name>
    <name type="common">Soybean</name>
    <name type="synonym">Glycine hispida</name>
    <dbReference type="NCBI Taxonomy" id="3847"/>
    <lineage>
        <taxon>Eukaryota</taxon>
        <taxon>Viridiplantae</taxon>
        <taxon>Streptophyta</taxon>
        <taxon>Embryophyta</taxon>
        <taxon>Tracheophyta</taxon>
        <taxon>Spermatophyta</taxon>
        <taxon>Magnoliopsida</taxon>
        <taxon>eudicotyledons</taxon>
        <taxon>Gunneridae</taxon>
        <taxon>Pentapetalae</taxon>
        <taxon>rosids</taxon>
        <taxon>fabids</taxon>
        <taxon>Fabales</taxon>
        <taxon>Fabaceae</taxon>
        <taxon>Papilionoideae</taxon>
        <taxon>50 kb inversion clade</taxon>
        <taxon>NPAAA clade</taxon>
        <taxon>indigoferoid/millettioid clade</taxon>
        <taxon>Phaseoleae</taxon>
        <taxon>Glycine</taxon>
        <taxon>Glycine subgen. Soja</taxon>
    </lineage>
</organism>
<comment type="function">
    <text evidence="2 3">Iron transporter that is involved in accumulation of Fe(2+) ions in the fixation zone of the root nodules (PubMed:32119117, PubMed:32533710). Exhibits low-level iron transport activity (PubMed:32119117, PubMed:32533710).</text>
</comment>
<comment type="catalytic activity">
    <reaction evidence="2 3">
        <text>Fe(2+)(in) = Fe(2+)(out)</text>
        <dbReference type="Rhea" id="RHEA:28486"/>
        <dbReference type="ChEBI" id="CHEBI:29033"/>
    </reaction>
    <physiologicalReaction direction="left-to-right" evidence="6">
        <dbReference type="Rhea" id="RHEA:28487"/>
    </physiologicalReaction>
</comment>
<comment type="subcellular location">
    <subcellularLocation>
        <location evidence="2">Endoplasmic reticulum membrane</location>
        <topology evidence="1">Multi-pass membrane protein</topology>
    </subcellularLocation>
    <subcellularLocation>
        <location evidence="3">Vacuole membrane</location>
        <topology evidence="1">Multi-pass membrane protein</topology>
    </subcellularLocation>
    <text evidence="3">Localizes at the symbiosome membrane in the cells infected with Bradyrhizobium japonicum.</text>
</comment>
<comment type="tissue specificity">
    <text evidence="2 3">Highly expressed in the fixation zone of the root nodule (PubMed:32119117, PubMed:32533710). No or low-level expression in root, leaf and stem (PubMed:32119117, PubMed:32533710).</text>
</comment>
<comment type="developmental stage">
    <text evidence="2 3">Abundant during nodule development (PubMed:32119117). In nodules, expression is first detected at 13 days after inoculation with Bradyrhizobium japonicum and continues to increase until 25 days after inoculation (PubMed:32533710). Expression subsequently declines until 46 days after inoculation (PubMed:32533710). The decrease in expression is followed by an increase and the highest level of expression is observed at 61 days after inoculation (PubMed:32533710).</text>
</comment>
<comment type="induction">
    <text evidence="2">No significant changes in expression observed in response to short- or long-term iron deficiency in nodules.</text>
</comment>
<comment type="similarity">
    <text evidence="6">Belongs to the CCC1 family.</text>
</comment>
<dbReference type="EMBL" id="BT099052">
    <property type="protein sequence ID" value="ACU24234.1"/>
    <property type="molecule type" value="mRNA"/>
</dbReference>
<dbReference type="EMBL" id="CM000841">
    <property type="protein sequence ID" value="KRH42215.1"/>
    <property type="molecule type" value="Genomic_DNA"/>
</dbReference>
<dbReference type="SMR" id="I1KR70"/>
<dbReference type="STRING" id="3847.GLYMA08G08120.1"/>
<dbReference type="PaxDb" id="3847-GLYMA08G08120.1"/>
<dbReference type="EnsemblPlants" id="KRH42215">
    <property type="protein sequence ID" value="KRH42215"/>
    <property type="gene ID" value="GLYMA_08G076300"/>
</dbReference>
<dbReference type="GeneID" id="100791523"/>
<dbReference type="Gramene" id="KRH42215">
    <property type="protein sequence ID" value="KRH42215"/>
    <property type="gene ID" value="GLYMA_08G076300"/>
</dbReference>
<dbReference type="KEGG" id="gmx:100791523"/>
<dbReference type="eggNOG" id="KOG4473">
    <property type="taxonomic scope" value="Eukaryota"/>
</dbReference>
<dbReference type="HOGENOM" id="CLU_038957_5_1_1"/>
<dbReference type="InParanoid" id="I1KR70"/>
<dbReference type="OMA" id="DIWNIAY"/>
<dbReference type="OrthoDB" id="73465at2759"/>
<dbReference type="Proteomes" id="UP000008827">
    <property type="component" value="Chromosome 8"/>
</dbReference>
<dbReference type="GO" id="GO:0005789">
    <property type="term" value="C:endoplasmic reticulum membrane"/>
    <property type="evidence" value="ECO:0007669"/>
    <property type="project" value="UniProtKB-SubCell"/>
</dbReference>
<dbReference type="GO" id="GO:0016020">
    <property type="term" value="C:membrane"/>
    <property type="evidence" value="ECO:0000318"/>
    <property type="project" value="GO_Central"/>
</dbReference>
<dbReference type="GO" id="GO:0005774">
    <property type="term" value="C:vacuolar membrane"/>
    <property type="evidence" value="ECO:0007669"/>
    <property type="project" value="UniProtKB-SubCell"/>
</dbReference>
<dbReference type="GO" id="GO:0005381">
    <property type="term" value="F:iron ion transmembrane transporter activity"/>
    <property type="evidence" value="ECO:0000318"/>
    <property type="project" value="GO_Central"/>
</dbReference>
<dbReference type="GO" id="GO:0005384">
    <property type="term" value="F:manganese ion transmembrane transporter activity"/>
    <property type="evidence" value="ECO:0000318"/>
    <property type="project" value="GO_Central"/>
</dbReference>
<dbReference type="GO" id="GO:0046872">
    <property type="term" value="F:metal ion binding"/>
    <property type="evidence" value="ECO:0007669"/>
    <property type="project" value="UniProtKB-KW"/>
</dbReference>
<dbReference type="GO" id="GO:0030026">
    <property type="term" value="P:intracellular manganese ion homeostasis"/>
    <property type="evidence" value="ECO:0000318"/>
    <property type="project" value="GO_Central"/>
</dbReference>
<dbReference type="GO" id="GO:0009877">
    <property type="term" value="P:nodulation"/>
    <property type="evidence" value="ECO:0007669"/>
    <property type="project" value="UniProtKB-KW"/>
</dbReference>
<dbReference type="CDD" id="cd02436">
    <property type="entry name" value="Nodulin-21"/>
    <property type="match status" value="1"/>
</dbReference>
<dbReference type="InterPro" id="IPR008217">
    <property type="entry name" value="Ccc1_fam"/>
</dbReference>
<dbReference type="PANTHER" id="PTHR31851">
    <property type="entry name" value="FE(2+)/MN(2+) TRANSPORTER PCL1"/>
    <property type="match status" value="1"/>
</dbReference>
<dbReference type="Pfam" id="PF01988">
    <property type="entry name" value="VIT1"/>
    <property type="match status" value="2"/>
</dbReference>